<feature type="chain" id="PRO_1000135023" description="RNA-binding protein Hfq">
    <location>
        <begin position="1"/>
        <end position="82"/>
    </location>
</feature>
<feature type="domain" description="Sm" evidence="2">
    <location>
        <begin position="11"/>
        <end position="71"/>
    </location>
</feature>
<proteinExistence type="inferred from homology"/>
<organism>
    <name type="scientific">Caulobacter vibrioides (strain NA1000 / CB15N)</name>
    <name type="common">Caulobacter crescentus</name>
    <dbReference type="NCBI Taxonomy" id="565050"/>
    <lineage>
        <taxon>Bacteria</taxon>
        <taxon>Pseudomonadati</taxon>
        <taxon>Pseudomonadota</taxon>
        <taxon>Alphaproteobacteria</taxon>
        <taxon>Caulobacterales</taxon>
        <taxon>Caulobacteraceae</taxon>
        <taxon>Caulobacter</taxon>
    </lineage>
</organism>
<name>HFQ_CAUVN</name>
<comment type="function">
    <text evidence="1">RNA chaperone that binds small regulatory RNA (sRNAs) and mRNAs to facilitate mRNA translational regulation in response to envelope stress, environmental stress and changes in metabolite concentrations. Also binds with high specificity to tRNAs.</text>
</comment>
<comment type="subunit">
    <text evidence="1">Homohexamer.</text>
</comment>
<comment type="similarity">
    <text evidence="1">Belongs to the Hfq family.</text>
</comment>
<protein>
    <recommendedName>
        <fullName evidence="1">RNA-binding protein Hfq</fullName>
    </recommendedName>
</protein>
<gene>
    <name evidence="1" type="primary">hfq</name>
    <name type="ordered locus">CCNA_01819</name>
</gene>
<sequence>MSAEKKQNLQDTFLNSVRKSKTPLTIFLVNGVKLQGVVSWFDNFCVLLRRDGQSQLVYKHAISTIMPAQPVQLYEPSADADD</sequence>
<dbReference type="EMBL" id="CP001340">
    <property type="protein sequence ID" value="ACL95284.1"/>
    <property type="molecule type" value="Genomic_DNA"/>
</dbReference>
<dbReference type="RefSeq" id="WP_010919613.1">
    <property type="nucleotide sequence ID" value="NC_011916.1"/>
</dbReference>
<dbReference type="RefSeq" id="YP_002517192.1">
    <property type="nucleotide sequence ID" value="NC_011916.1"/>
</dbReference>
<dbReference type="SMR" id="B8GW92"/>
<dbReference type="GeneID" id="7331286"/>
<dbReference type="KEGG" id="ccs:CCNA_01819"/>
<dbReference type="PATRIC" id="fig|565050.3.peg.1788"/>
<dbReference type="HOGENOM" id="CLU_113688_0_0_5"/>
<dbReference type="OrthoDB" id="9799751at2"/>
<dbReference type="PhylomeDB" id="B8GW92"/>
<dbReference type="Proteomes" id="UP000001364">
    <property type="component" value="Chromosome"/>
</dbReference>
<dbReference type="GO" id="GO:0005829">
    <property type="term" value="C:cytosol"/>
    <property type="evidence" value="ECO:0007669"/>
    <property type="project" value="TreeGrafter"/>
</dbReference>
<dbReference type="GO" id="GO:0003723">
    <property type="term" value="F:RNA binding"/>
    <property type="evidence" value="ECO:0007669"/>
    <property type="project" value="UniProtKB-UniRule"/>
</dbReference>
<dbReference type="GO" id="GO:0006355">
    <property type="term" value="P:regulation of DNA-templated transcription"/>
    <property type="evidence" value="ECO:0007669"/>
    <property type="project" value="InterPro"/>
</dbReference>
<dbReference type="GO" id="GO:0043487">
    <property type="term" value="P:regulation of RNA stability"/>
    <property type="evidence" value="ECO:0007669"/>
    <property type="project" value="TreeGrafter"/>
</dbReference>
<dbReference type="GO" id="GO:0045974">
    <property type="term" value="P:regulation of translation, ncRNA-mediated"/>
    <property type="evidence" value="ECO:0007669"/>
    <property type="project" value="TreeGrafter"/>
</dbReference>
<dbReference type="CDD" id="cd01716">
    <property type="entry name" value="Hfq"/>
    <property type="match status" value="1"/>
</dbReference>
<dbReference type="FunFam" id="2.30.30.100:FF:000001">
    <property type="entry name" value="RNA-binding protein Hfq"/>
    <property type="match status" value="1"/>
</dbReference>
<dbReference type="Gene3D" id="2.30.30.100">
    <property type="match status" value="1"/>
</dbReference>
<dbReference type="HAMAP" id="MF_00436">
    <property type="entry name" value="Hfq"/>
    <property type="match status" value="1"/>
</dbReference>
<dbReference type="InterPro" id="IPR005001">
    <property type="entry name" value="Hfq"/>
</dbReference>
<dbReference type="InterPro" id="IPR010920">
    <property type="entry name" value="LSM_dom_sf"/>
</dbReference>
<dbReference type="InterPro" id="IPR047575">
    <property type="entry name" value="Sm"/>
</dbReference>
<dbReference type="NCBIfam" id="TIGR02383">
    <property type="entry name" value="Hfq"/>
    <property type="match status" value="1"/>
</dbReference>
<dbReference type="NCBIfam" id="NF001602">
    <property type="entry name" value="PRK00395.1"/>
    <property type="match status" value="1"/>
</dbReference>
<dbReference type="PANTHER" id="PTHR34772">
    <property type="entry name" value="RNA-BINDING PROTEIN HFQ"/>
    <property type="match status" value="1"/>
</dbReference>
<dbReference type="PANTHER" id="PTHR34772:SF1">
    <property type="entry name" value="RNA-BINDING PROTEIN HFQ"/>
    <property type="match status" value="1"/>
</dbReference>
<dbReference type="Pfam" id="PF17209">
    <property type="entry name" value="Hfq"/>
    <property type="match status" value="1"/>
</dbReference>
<dbReference type="SUPFAM" id="SSF50182">
    <property type="entry name" value="Sm-like ribonucleoproteins"/>
    <property type="match status" value="1"/>
</dbReference>
<dbReference type="PROSITE" id="PS52002">
    <property type="entry name" value="SM"/>
    <property type="match status" value="1"/>
</dbReference>
<keyword id="KW-1185">Reference proteome</keyword>
<keyword id="KW-0694">RNA-binding</keyword>
<keyword id="KW-0346">Stress response</keyword>
<evidence type="ECO:0000255" key="1">
    <source>
        <dbReference type="HAMAP-Rule" id="MF_00436"/>
    </source>
</evidence>
<evidence type="ECO:0000255" key="2">
    <source>
        <dbReference type="PROSITE-ProRule" id="PRU01346"/>
    </source>
</evidence>
<accession>B8GW92</accession>
<reference key="1">
    <citation type="journal article" date="2010" name="J. Bacteriol.">
        <title>The genetic basis of laboratory adaptation in Caulobacter crescentus.</title>
        <authorList>
            <person name="Marks M.E."/>
            <person name="Castro-Rojas C.M."/>
            <person name="Teiling C."/>
            <person name="Du L."/>
            <person name="Kapatral V."/>
            <person name="Walunas T.L."/>
            <person name="Crosson S."/>
        </authorList>
    </citation>
    <scope>NUCLEOTIDE SEQUENCE [LARGE SCALE GENOMIC DNA]</scope>
    <source>
        <strain>NA1000 / CB15N</strain>
    </source>
</reference>